<name>DAPA_ANAD2</name>
<proteinExistence type="inferred from homology"/>
<feature type="chain" id="PRO_1000134855" description="4-hydroxy-tetrahydrodipicolinate synthase">
    <location>
        <begin position="1"/>
        <end position="295"/>
    </location>
</feature>
<feature type="active site" description="Proton donor/acceptor" evidence="1">
    <location>
        <position position="134"/>
    </location>
</feature>
<feature type="active site" description="Schiff-base intermediate with substrate" evidence="1">
    <location>
        <position position="162"/>
    </location>
</feature>
<feature type="binding site" evidence="1">
    <location>
        <position position="46"/>
    </location>
    <ligand>
        <name>pyruvate</name>
        <dbReference type="ChEBI" id="CHEBI:15361"/>
    </ligand>
</feature>
<feature type="binding site" evidence="1">
    <location>
        <position position="205"/>
    </location>
    <ligand>
        <name>pyruvate</name>
        <dbReference type="ChEBI" id="CHEBI:15361"/>
    </ligand>
</feature>
<feature type="site" description="Part of a proton relay during catalysis" evidence="1">
    <location>
        <position position="45"/>
    </location>
</feature>
<feature type="site" description="Part of a proton relay during catalysis" evidence="1">
    <location>
        <position position="108"/>
    </location>
</feature>
<reference key="1">
    <citation type="submission" date="2009-01" db="EMBL/GenBank/DDBJ databases">
        <title>Complete sequence of Anaeromyxobacter dehalogenans 2CP-1.</title>
        <authorList>
            <person name="Lucas S."/>
            <person name="Copeland A."/>
            <person name="Lapidus A."/>
            <person name="Glavina del Rio T."/>
            <person name="Dalin E."/>
            <person name="Tice H."/>
            <person name="Bruce D."/>
            <person name="Goodwin L."/>
            <person name="Pitluck S."/>
            <person name="Saunders E."/>
            <person name="Brettin T."/>
            <person name="Detter J.C."/>
            <person name="Han C."/>
            <person name="Larimer F."/>
            <person name="Land M."/>
            <person name="Hauser L."/>
            <person name="Kyrpides N."/>
            <person name="Ovchinnikova G."/>
            <person name="Beliaev A.S."/>
            <person name="Richardson P."/>
        </authorList>
    </citation>
    <scope>NUCLEOTIDE SEQUENCE [LARGE SCALE GENOMIC DNA]</scope>
    <source>
        <strain>2CP-1 / ATCC BAA-258</strain>
    </source>
</reference>
<keyword id="KW-0028">Amino-acid biosynthesis</keyword>
<keyword id="KW-0963">Cytoplasm</keyword>
<keyword id="KW-0220">Diaminopimelate biosynthesis</keyword>
<keyword id="KW-0456">Lyase</keyword>
<keyword id="KW-0457">Lysine biosynthesis</keyword>
<keyword id="KW-0704">Schiff base</keyword>
<evidence type="ECO:0000255" key="1">
    <source>
        <dbReference type="HAMAP-Rule" id="MF_00418"/>
    </source>
</evidence>
<evidence type="ECO:0000305" key="2"/>
<protein>
    <recommendedName>
        <fullName evidence="1">4-hydroxy-tetrahydrodipicolinate synthase</fullName>
        <shortName evidence="1">HTPA synthase</shortName>
        <ecNumber evidence="1">4.3.3.7</ecNumber>
    </recommendedName>
</protein>
<sequence length="295" mass="31069">MRRLEGSMVAIVTPMKDGAVDLRALRDLTEWQLAEGTDGIVPCGTTGEGVTLTPAERADVIRTVIETVRGRALVIAGAGSNATHEAIESVKLAKTLGADAALVVTPYYNKPTQEGLFRHYQAIWEATRFPVVAYNVPSRTSVDLLPETVARLAKAGAIAGIKEATANMDRQVQLVEKVGKDAIAYLSGDDFTVLPYIACGGHGVISVIANVAPRAMKELVVAARSGDLAGALAKQAAMAELNRMMFVETNPGPVKAAVALLGRSGGELRLPLAPVSEASLAKVRDAMVRFGLKLA</sequence>
<organism>
    <name type="scientific">Anaeromyxobacter dehalogenans (strain 2CP-1 / ATCC BAA-258)</name>
    <dbReference type="NCBI Taxonomy" id="455488"/>
    <lineage>
        <taxon>Bacteria</taxon>
        <taxon>Pseudomonadati</taxon>
        <taxon>Myxococcota</taxon>
        <taxon>Myxococcia</taxon>
        <taxon>Myxococcales</taxon>
        <taxon>Cystobacterineae</taxon>
        <taxon>Anaeromyxobacteraceae</taxon>
        <taxon>Anaeromyxobacter</taxon>
    </lineage>
</organism>
<dbReference type="EC" id="4.3.3.7" evidence="1"/>
<dbReference type="EMBL" id="CP001359">
    <property type="protein sequence ID" value="ACL67534.1"/>
    <property type="molecule type" value="Genomic_DNA"/>
</dbReference>
<dbReference type="RefSeq" id="WP_015935245.1">
    <property type="nucleotide sequence ID" value="NC_011891.1"/>
</dbReference>
<dbReference type="SMR" id="B8JAN5"/>
<dbReference type="KEGG" id="acp:A2cp1_4217"/>
<dbReference type="HOGENOM" id="CLU_049343_7_1_7"/>
<dbReference type="UniPathway" id="UPA00034">
    <property type="reaction ID" value="UER00017"/>
</dbReference>
<dbReference type="Proteomes" id="UP000007089">
    <property type="component" value="Chromosome"/>
</dbReference>
<dbReference type="GO" id="GO:0005829">
    <property type="term" value="C:cytosol"/>
    <property type="evidence" value="ECO:0007669"/>
    <property type="project" value="TreeGrafter"/>
</dbReference>
<dbReference type="GO" id="GO:0008840">
    <property type="term" value="F:4-hydroxy-tetrahydrodipicolinate synthase activity"/>
    <property type="evidence" value="ECO:0007669"/>
    <property type="project" value="UniProtKB-UniRule"/>
</dbReference>
<dbReference type="GO" id="GO:0019877">
    <property type="term" value="P:diaminopimelate biosynthetic process"/>
    <property type="evidence" value="ECO:0007669"/>
    <property type="project" value="UniProtKB-UniRule"/>
</dbReference>
<dbReference type="GO" id="GO:0009089">
    <property type="term" value="P:lysine biosynthetic process via diaminopimelate"/>
    <property type="evidence" value="ECO:0007669"/>
    <property type="project" value="UniProtKB-UniRule"/>
</dbReference>
<dbReference type="CDD" id="cd00950">
    <property type="entry name" value="DHDPS"/>
    <property type="match status" value="1"/>
</dbReference>
<dbReference type="Gene3D" id="3.20.20.70">
    <property type="entry name" value="Aldolase class I"/>
    <property type="match status" value="1"/>
</dbReference>
<dbReference type="HAMAP" id="MF_00418">
    <property type="entry name" value="DapA"/>
    <property type="match status" value="1"/>
</dbReference>
<dbReference type="InterPro" id="IPR013785">
    <property type="entry name" value="Aldolase_TIM"/>
</dbReference>
<dbReference type="InterPro" id="IPR005263">
    <property type="entry name" value="DapA"/>
</dbReference>
<dbReference type="InterPro" id="IPR002220">
    <property type="entry name" value="DapA-like"/>
</dbReference>
<dbReference type="InterPro" id="IPR020625">
    <property type="entry name" value="Schiff_base-form_aldolases_AS"/>
</dbReference>
<dbReference type="InterPro" id="IPR020624">
    <property type="entry name" value="Schiff_base-form_aldolases_CS"/>
</dbReference>
<dbReference type="NCBIfam" id="TIGR00674">
    <property type="entry name" value="dapA"/>
    <property type="match status" value="1"/>
</dbReference>
<dbReference type="PANTHER" id="PTHR12128:SF66">
    <property type="entry name" value="4-HYDROXY-2-OXOGLUTARATE ALDOLASE, MITOCHONDRIAL"/>
    <property type="match status" value="1"/>
</dbReference>
<dbReference type="PANTHER" id="PTHR12128">
    <property type="entry name" value="DIHYDRODIPICOLINATE SYNTHASE"/>
    <property type="match status" value="1"/>
</dbReference>
<dbReference type="Pfam" id="PF00701">
    <property type="entry name" value="DHDPS"/>
    <property type="match status" value="1"/>
</dbReference>
<dbReference type="PIRSF" id="PIRSF001365">
    <property type="entry name" value="DHDPS"/>
    <property type="match status" value="1"/>
</dbReference>
<dbReference type="PRINTS" id="PR00146">
    <property type="entry name" value="DHPICSNTHASE"/>
</dbReference>
<dbReference type="SMART" id="SM01130">
    <property type="entry name" value="DHDPS"/>
    <property type="match status" value="1"/>
</dbReference>
<dbReference type="SUPFAM" id="SSF51569">
    <property type="entry name" value="Aldolase"/>
    <property type="match status" value="1"/>
</dbReference>
<dbReference type="PROSITE" id="PS00665">
    <property type="entry name" value="DHDPS_1"/>
    <property type="match status" value="1"/>
</dbReference>
<dbReference type="PROSITE" id="PS00666">
    <property type="entry name" value="DHDPS_2"/>
    <property type="match status" value="1"/>
</dbReference>
<gene>
    <name evidence="1" type="primary">dapA</name>
    <name type="ordered locus">A2cp1_4217</name>
</gene>
<accession>B8JAN5</accession>
<comment type="function">
    <text evidence="1">Catalyzes the condensation of (S)-aspartate-beta-semialdehyde [(S)-ASA] and pyruvate to 4-hydroxy-tetrahydrodipicolinate (HTPA).</text>
</comment>
<comment type="catalytic activity">
    <reaction evidence="1">
        <text>L-aspartate 4-semialdehyde + pyruvate = (2S,4S)-4-hydroxy-2,3,4,5-tetrahydrodipicolinate + H2O + H(+)</text>
        <dbReference type="Rhea" id="RHEA:34171"/>
        <dbReference type="ChEBI" id="CHEBI:15361"/>
        <dbReference type="ChEBI" id="CHEBI:15377"/>
        <dbReference type="ChEBI" id="CHEBI:15378"/>
        <dbReference type="ChEBI" id="CHEBI:67139"/>
        <dbReference type="ChEBI" id="CHEBI:537519"/>
        <dbReference type="EC" id="4.3.3.7"/>
    </reaction>
</comment>
<comment type="pathway">
    <text evidence="1">Amino-acid biosynthesis; L-lysine biosynthesis via DAP pathway; (S)-tetrahydrodipicolinate from L-aspartate: step 3/4.</text>
</comment>
<comment type="subunit">
    <text evidence="1">Homotetramer; dimer of dimers.</text>
</comment>
<comment type="subcellular location">
    <subcellularLocation>
        <location evidence="1">Cytoplasm</location>
    </subcellularLocation>
</comment>
<comment type="similarity">
    <text evidence="1">Belongs to the DapA family.</text>
</comment>
<comment type="caution">
    <text evidence="2">Was originally thought to be a dihydrodipicolinate synthase (DHDPS), catalyzing the condensation of (S)-aspartate-beta-semialdehyde [(S)-ASA] and pyruvate to dihydrodipicolinate (DHDP). However, it was shown in E.coli that the product of the enzymatic reaction is not dihydrodipicolinate but in fact (4S)-4-hydroxy-2,3,4,5-tetrahydro-(2S)-dipicolinic acid (HTPA), and that the consecutive dehydration reaction leading to DHDP is not spontaneous but catalyzed by DapB.</text>
</comment>